<accession>Q8YFH7</accession>
<evidence type="ECO:0000255" key="1">
    <source>
        <dbReference type="HAMAP-Rule" id="MF_01398"/>
    </source>
</evidence>
<evidence type="ECO:0000256" key="2">
    <source>
        <dbReference type="SAM" id="MobiDB-lite"/>
    </source>
</evidence>
<evidence type="ECO:0000305" key="3"/>
<name>ATPF_BRUME</name>
<reference key="1">
    <citation type="journal article" date="2002" name="Proc. Natl. Acad. Sci. U.S.A.">
        <title>The genome sequence of the facultative intracellular pathogen Brucella melitensis.</title>
        <authorList>
            <person name="DelVecchio V.G."/>
            <person name="Kapatral V."/>
            <person name="Redkar R.J."/>
            <person name="Patra G."/>
            <person name="Mujer C."/>
            <person name="Los T."/>
            <person name="Ivanova N."/>
            <person name="Anderson I."/>
            <person name="Bhattacharyya A."/>
            <person name="Lykidis A."/>
            <person name="Reznik G."/>
            <person name="Jablonski L."/>
            <person name="Larsen N."/>
            <person name="D'Souza M."/>
            <person name="Bernal A."/>
            <person name="Mazur M."/>
            <person name="Goltsman E."/>
            <person name="Selkov E."/>
            <person name="Elzer P.H."/>
            <person name="Hagius S."/>
            <person name="O'Callaghan D."/>
            <person name="Letesson J.-J."/>
            <person name="Haselkorn R."/>
            <person name="Kyrpides N.C."/>
            <person name="Overbeek R."/>
        </authorList>
    </citation>
    <scope>NUCLEOTIDE SEQUENCE [LARGE SCALE GENOMIC DNA]</scope>
    <source>
        <strain>ATCC 23456 / CCUG 17765 / NCTC 10094 / 16M</strain>
    </source>
</reference>
<dbReference type="EMBL" id="AE008917">
    <property type="protein sequence ID" value="AAL52725.1"/>
    <property type="status" value="ALT_INIT"/>
    <property type="molecule type" value="Genomic_DNA"/>
</dbReference>
<dbReference type="PIR" id="AB3445">
    <property type="entry name" value="AB3445"/>
</dbReference>
<dbReference type="RefSeq" id="WP_004683012.1">
    <property type="nucleotide sequence ID" value="NZ_GG703778.1"/>
</dbReference>
<dbReference type="SMR" id="Q8YFH7"/>
<dbReference type="GeneID" id="29594394"/>
<dbReference type="KEGG" id="bme:BMEI1544"/>
<dbReference type="KEGG" id="bmel:DK63_1949"/>
<dbReference type="PATRIC" id="fig|224914.52.peg.2050"/>
<dbReference type="eggNOG" id="COG0711">
    <property type="taxonomic scope" value="Bacteria"/>
</dbReference>
<dbReference type="PhylomeDB" id="Q8YFH7"/>
<dbReference type="Proteomes" id="UP000000419">
    <property type="component" value="Chromosome I"/>
</dbReference>
<dbReference type="GO" id="GO:0005886">
    <property type="term" value="C:plasma membrane"/>
    <property type="evidence" value="ECO:0007669"/>
    <property type="project" value="UniProtKB-SubCell"/>
</dbReference>
<dbReference type="GO" id="GO:0045259">
    <property type="term" value="C:proton-transporting ATP synthase complex"/>
    <property type="evidence" value="ECO:0007669"/>
    <property type="project" value="UniProtKB-KW"/>
</dbReference>
<dbReference type="GO" id="GO:0046933">
    <property type="term" value="F:proton-transporting ATP synthase activity, rotational mechanism"/>
    <property type="evidence" value="ECO:0007669"/>
    <property type="project" value="UniProtKB-UniRule"/>
</dbReference>
<dbReference type="GO" id="GO:0046961">
    <property type="term" value="F:proton-transporting ATPase activity, rotational mechanism"/>
    <property type="evidence" value="ECO:0007669"/>
    <property type="project" value="TreeGrafter"/>
</dbReference>
<dbReference type="CDD" id="cd06503">
    <property type="entry name" value="ATP-synt_Fo_b"/>
    <property type="match status" value="1"/>
</dbReference>
<dbReference type="Gene3D" id="6.10.250.1580">
    <property type="match status" value="1"/>
</dbReference>
<dbReference type="HAMAP" id="MF_01398">
    <property type="entry name" value="ATP_synth_b_bprime"/>
    <property type="match status" value="1"/>
</dbReference>
<dbReference type="InterPro" id="IPR002146">
    <property type="entry name" value="ATP_synth_b/b'su_bac/chlpt"/>
</dbReference>
<dbReference type="InterPro" id="IPR050059">
    <property type="entry name" value="ATP_synthase_B_chain"/>
</dbReference>
<dbReference type="NCBIfam" id="NF006612">
    <property type="entry name" value="PRK09174.1"/>
    <property type="match status" value="1"/>
</dbReference>
<dbReference type="PANTHER" id="PTHR33445:SF1">
    <property type="entry name" value="ATP SYNTHASE SUBUNIT B"/>
    <property type="match status" value="1"/>
</dbReference>
<dbReference type="PANTHER" id="PTHR33445">
    <property type="entry name" value="ATP SYNTHASE SUBUNIT B', CHLOROPLASTIC"/>
    <property type="match status" value="1"/>
</dbReference>
<dbReference type="Pfam" id="PF00430">
    <property type="entry name" value="ATP-synt_B"/>
    <property type="match status" value="1"/>
</dbReference>
<proteinExistence type="inferred from homology"/>
<keyword id="KW-0066">ATP synthesis</keyword>
<keyword id="KW-0997">Cell inner membrane</keyword>
<keyword id="KW-1003">Cell membrane</keyword>
<keyword id="KW-0138">CF(0)</keyword>
<keyword id="KW-0375">Hydrogen ion transport</keyword>
<keyword id="KW-0406">Ion transport</keyword>
<keyword id="KW-0472">Membrane</keyword>
<keyword id="KW-0812">Transmembrane</keyword>
<keyword id="KW-1133">Transmembrane helix</keyword>
<keyword id="KW-0813">Transport</keyword>
<organism>
    <name type="scientific">Brucella melitensis biotype 1 (strain ATCC 23456 / CCUG 17765 / NCTC 10094 / 16M)</name>
    <dbReference type="NCBI Taxonomy" id="224914"/>
    <lineage>
        <taxon>Bacteria</taxon>
        <taxon>Pseudomonadati</taxon>
        <taxon>Pseudomonadota</taxon>
        <taxon>Alphaproteobacteria</taxon>
        <taxon>Hyphomicrobiales</taxon>
        <taxon>Brucellaceae</taxon>
        <taxon>Brucella/Ochrobactrum group</taxon>
        <taxon>Brucella</taxon>
    </lineage>
</organism>
<protein>
    <recommendedName>
        <fullName evidence="1">ATP synthase subunit b</fullName>
    </recommendedName>
    <alternativeName>
        <fullName evidence="1">ATP synthase F(0) sector subunit b</fullName>
    </alternativeName>
    <alternativeName>
        <fullName evidence="1">ATPase subunit I</fullName>
    </alternativeName>
    <alternativeName>
        <fullName evidence="1">F-type ATPase subunit b</fullName>
        <shortName evidence="1">F-ATPase subunit b</shortName>
    </alternativeName>
</protein>
<feature type="chain" id="PRO_0000368371" description="ATP synthase subunit b">
    <location>
        <begin position="1"/>
        <end position="208"/>
    </location>
</feature>
<feature type="transmembrane region" description="Helical" evidence="1">
    <location>
        <begin position="56"/>
        <end position="78"/>
    </location>
</feature>
<feature type="region of interest" description="Disordered" evidence="2">
    <location>
        <begin position="1"/>
        <end position="26"/>
    </location>
</feature>
<feature type="compositionally biased region" description="Polar residues" evidence="2">
    <location>
        <begin position="1"/>
        <end position="18"/>
    </location>
</feature>
<sequence>MFVSTAFAQTATESQPASTAGEHGAADAVHTETGVAHDAGHGSGVFPPFDSTHYASQVLWLAITFGLFYLFLSRVVLPRIGGVIETRRDRIAQDLEQAARLKQDADNAIAAYEQELAQARSKAASIAEAAREKGKGEADAERASAEAVLESKLKEAEERIAAIKAKAMSDVGNIAEETMATIVEQLLGLTADKASVSEAVKAIRASNA</sequence>
<comment type="function">
    <text evidence="1">F(1)F(0) ATP synthase produces ATP from ADP in the presence of a proton or sodium gradient. F-type ATPases consist of two structural domains, F(1) containing the extramembraneous catalytic core and F(0) containing the membrane proton channel, linked together by a central stalk and a peripheral stalk. During catalysis, ATP synthesis in the catalytic domain of F(1) is coupled via a rotary mechanism of the central stalk subunits to proton translocation.</text>
</comment>
<comment type="function">
    <text evidence="1">Component of the F(0) channel, it forms part of the peripheral stalk, linking F(1) to F(0).</text>
</comment>
<comment type="subunit">
    <text evidence="1">F-type ATPases have 2 components, F(1) - the catalytic core - and F(0) - the membrane proton channel. F(1) has five subunits: alpha(3), beta(3), gamma(1), delta(1), epsilon(1). F(0) has three main subunits: a(1), b(2) and c(10-14). The alpha and beta chains form an alternating ring which encloses part of the gamma chain. F(1) is attached to F(0) by a central stalk formed by the gamma and epsilon chains, while a peripheral stalk is formed by the delta and b chains.</text>
</comment>
<comment type="subcellular location">
    <subcellularLocation>
        <location evidence="1">Cell inner membrane</location>
        <topology evidence="1">Single-pass membrane protein</topology>
    </subcellularLocation>
</comment>
<comment type="similarity">
    <text evidence="1">Belongs to the ATPase B chain family.</text>
</comment>
<comment type="sequence caution" evidence="3">
    <conflict type="erroneous initiation">
        <sequence resource="EMBL-CDS" id="AAL52725"/>
    </conflict>
</comment>
<gene>
    <name evidence="1" type="primary">atpF</name>
    <name type="ordered locus">BMEI1544</name>
</gene>